<organism>
    <name type="scientific">Xylella fastidiosa (strain 9a5c)</name>
    <dbReference type="NCBI Taxonomy" id="160492"/>
    <lineage>
        <taxon>Bacteria</taxon>
        <taxon>Pseudomonadati</taxon>
        <taxon>Pseudomonadota</taxon>
        <taxon>Gammaproteobacteria</taxon>
        <taxon>Lysobacterales</taxon>
        <taxon>Lysobacteraceae</taxon>
        <taxon>Xylella</taxon>
    </lineage>
</organism>
<dbReference type="EMBL" id="AE003849">
    <property type="protein sequence ID" value="AAF83998.1"/>
    <property type="molecule type" value="Genomic_DNA"/>
</dbReference>
<dbReference type="PIR" id="B82712">
    <property type="entry name" value="B82712"/>
</dbReference>
<dbReference type="RefSeq" id="WP_010893699.1">
    <property type="nucleotide sequence ID" value="NC_002488.3"/>
</dbReference>
<dbReference type="SMR" id="Q9PE40"/>
<dbReference type="STRING" id="160492.XF_1188"/>
<dbReference type="KEGG" id="xfa:XF_1188"/>
<dbReference type="eggNOG" id="COG1219">
    <property type="taxonomic scope" value="Bacteria"/>
</dbReference>
<dbReference type="HOGENOM" id="CLU_014218_8_2_6"/>
<dbReference type="Proteomes" id="UP000000812">
    <property type="component" value="Chromosome"/>
</dbReference>
<dbReference type="GO" id="GO:0009376">
    <property type="term" value="C:HslUV protease complex"/>
    <property type="evidence" value="ECO:0007669"/>
    <property type="project" value="TreeGrafter"/>
</dbReference>
<dbReference type="GO" id="GO:0005524">
    <property type="term" value="F:ATP binding"/>
    <property type="evidence" value="ECO:0007669"/>
    <property type="project" value="UniProtKB-UniRule"/>
</dbReference>
<dbReference type="GO" id="GO:0016887">
    <property type="term" value="F:ATP hydrolysis activity"/>
    <property type="evidence" value="ECO:0007669"/>
    <property type="project" value="InterPro"/>
</dbReference>
<dbReference type="GO" id="GO:0140662">
    <property type="term" value="F:ATP-dependent protein folding chaperone"/>
    <property type="evidence" value="ECO:0007669"/>
    <property type="project" value="InterPro"/>
</dbReference>
<dbReference type="GO" id="GO:0046983">
    <property type="term" value="F:protein dimerization activity"/>
    <property type="evidence" value="ECO:0007669"/>
    <property type="project" value="InterPro"/>
</dbReference>
<dbReference type="GO" id="GO:0051082">
    <property type="term" value="F:unfolded protein binding"/>
    <property type="evidence" value="ECO:0007669"/>
    <property type="project" value="UniProtKB-UniRule"/>
</dbReference>
<dbReference type="GO" id="GO:0008270">
    <property type="term" value="F:zinc ion binding"/>
    <property type="evidence" value="ECO:0007669"/>
    <property type="project" value="InterPro"/>
</dbReference>
<dbReference type="GO" id="GO:0051301">
    <property type="term" value="P:cell division"/>
    <property type="evidence" value="ECO:0007669"/>
    <property type="project" value="TreeGrafter"/>
</dbReference>
<dbReference type="GO" id="GO:0051603">
    <property type="term" value="P:proteolysis involved in protein catabolic process"/>
    <property type="evidence" value="ECO:0007669"/>
    <property type="project" value="TreeGrafter"/>
</dbReference>
<dbReference type="CDD" id="cd19497">
    <property type="entry name" value="RecA-like_ClpX"/>
    <property type="match status" value="1"/>
</dbReference>
<dbReference type="FunFam" id="1.10.8.60:FF:000002">
    <property type="entry name" value="ATP-dependent Clp protease ATP-binding subunit ClpX"/>
    <property type="match status" value="1"/>
</dbReference>
<dbReference type="FunFam" id="3.40.50.300:FF:000005">
    <property type="entry name" value="ATP-dependent Clp protease ATP-binding subunit ClpX"/>
    <property type="match status" value="1"/>
</dbReference>
<dbReference type="Gene3D" id="1.10.8.60">
    <property type="match status" value="1"/>
</dbReference>
<dbReference type="Gene3D" id="6.20.220.10">
    <property type="entry name" value="ClpX chaperone, C4-type zinc finger domain"/>
    <property type="match status" value="1"/>
</dbReference>
<dbReference type="Gene3D" id="3.40.50.300">
    <property type="entry name" value="P-loop containing nucleotide triphosphate hydrolases"/>
    <property type="match status" value="1"/>
</dbReference>
<dbReference type="HAMAP" id="MF_00175">
    <property type="entry name" value="ClpX"/>
    <property type="match status" value="1"/>
</dbReference>
<dbReference type="InterPro" id="IPR003593">
    <property type="entry name" value="AAA+_ATPase"/>
</dbReference>
<dbReference type="InterPro" id="IPR050052">
    <property type="entry name" value="ATP-dep_Clp_protease_ClpX"/>
</dbReference>
<dbReference type="InterPro" id="IPR003959">
    <property type="entry name" value="ATPase_AAA_core"/>
</dbReference>
<dbReference type="InterPro" id="IPR019489">
    <property type="entry name" value="Clp_ATPase_C"/>
</dbReference>
<dbReference type="InterPro" id="IPR004487">
    <property type="entry name" value="Clp_protease_ATP-bd_su_ClpX"/>
</dbReference>
<dbReference type="InterPro" id="IPR046425">
    <property type="entry name" value="ClpX_bact"/>
</dbReference>
<dbReference type="InterPro" id="IPR027417">
    <property type="entry name" value="P-loop_NTPase"/>
</dbReference>
<dbReference type="InterPro" id="IPR010603">
    <property type="entry name" value="Znf_CppX_C4"/>
</dbReference>
<dbReference type="InterPro" id="IPR038366">
    <property type="entry name" value="Znf_CppX_C4_sf"/>
</dbReference>
<dbReference type="NCBIfam" id="TIGR00382">
    <property type="entry name" value="clpX"/>
    <property type="match status" value="1"/>
</dbReference>
<dbReference type="NCBIfam" id="NF003745">
    <property type="entry name" value="PRK05342.1"/>
    <property type="match status" value="1"/>
</dbReference>
<dbReference type="PANTHER" id="PTHR48102:SF7">
    <property type="entry name" value="ATP-DEPENDENT CLP PROTEASE ATP-BINDING SUBUNIT CLPX-LIKE, MITOCHONDRIAL"/>
    <property type="match status" value="1"/>
</dbReference>
<dbReference type="PANTHER" id="PTHR48102">
    <property type="entry name" value="ATP-DEPENDENT CLP PROTEASE ATP-BINDING SUBUNIT CLPX-LIKE, MITOCHONDRIAL-RELATED"/>
    <property type="match status" value="1"/>
</dbReference>
<dbReference type="Pfam" id="PF07724">
    <property type="entry name" value="AAA_2"/>
    <property type="match status" value="1"/>
</dbReference>
<dbReference type="Pfam" id="PF10431">
    <property type="entry name" value="ClpB_D2-small"/>
    <property type="match status" value="1"/>
</dbReference>
<dbReference type="Pfam" id="PF06689">
    <property type="entry name" value="zf-C4_ClpX"/>
    <property type="match status" value="1"/>
</dbReference>
<dbReference type="SMART" id="SM00382">
    <property type="entry name" value="AAA"/>
    <property type="match status" value="1"/>
</dbReference>
<dbReference type="SMART" id="SM01086">
    <property type="entry name" value="ClpB_D2-small"/>
    <property type="match status" value="1"/>
</dbReference>
<dbReference type="SMART" id="SM00994">
    <property type="entry name" value="zf-C4_ClpX"/>
    <property type="match status" value="1"/>
</dbReference>
<dbReference type="SUPFAM" id="SSF57716">
    <property type="entry name" value="Glucocorticoid receptor-like (DNA-binding domain)"/>
    <property type="match status" value="1"/>
</dbReference>
<dbReference type="SUPFAM" id="SSF52540">
    <property type="entry name" value="P-loop containing nucleoside triphosphate hydrolases"/>
    <property type="match status" value="1"/>
</dbReference>
<dbReference type="PROSITE" id="PS51902">
    <property type="entry name" value="CLPX_ZB"/>
    <property type="match status" value="1"/>
</dbReference>
<reference key="1">
    <citation type="journal article" date="2000" name="Nature">
        <title>The genome sequence of the plant pathogen Xylella fastidiosa.</title>
        <authorList>
            <person name="Simpson A.J.G."/>
            <person name="Reinach F.C."/>
            <person name="Arruda P."/>
            <person name="Abreu F.A."/>
            <person name="Acencio M."/>
            <person name="Alvarenga R."/>
            <person name="Alves L.M.C."/>
            <person name="Araya J.E."/>
            <person name="Baia G.S."/>
            <person name="Baptista C.S."/>
            <person name="Barros M.H."/>
            <person name="Bonaccorsi E.D."/>
            <person name="Bordin S."/>
            <person name="Bove J.M."/>
            <person name="Briones M.R.S."/>
            <person name="Bueno M.R.P."/>
            <person name="Camargo A.A."/>
            <person name="Camargo L.E.A."/>
            <person name="Carraro D.M."/>
            <person name="Carrer H."/>
            <person name="Colauto N.B."/>
            <person name="Colombo C."/>
            <person name="Costa F.F."/>
            <person name="Costa M.C.R."/>
            <person name="Costa-Neto C.M."/>
            <person name="Coutinho L.L."/>
            <person name="Cristofani M."/>
            <person name="Dias-Neto E."/>
            <person name="Docena C."/>
            <person name="El-Dorry H."/>
            <person name="Facincani A.P."/>
            <person name="Ferreira A.J.S."/>
            <person name="Ferreira V.C.A."/>
            <person name="Ferro J.A."/>
            <person name="Fraga J.S."/>
            <person name="Franca S.C."/>
            <person name="Franco M.C."/>
            <person name="Frohme M."/>
            <person name="Furlan L.R."/>
            <person name="Garnier M."/>
            <person name="Goldman G.H."/>
            <person name="Goldman M.H.S."/>
            <person name="Gomes S.L."/>
            <person name="Gruber A."/>
            <person name="Ho P.L."/>
            <person name="Hoheisel J.D."/>
            <person name="Junqueira M.L."/>
            <person name="Kemper E.L."/>
            <person name="Kitajima J.P."/>
            <person name="Krieger J.E."/>
            <person name="Kuramae E.E."/>
            <person name="Laigret F."/>
            <person name="Lambais M.R."/>
            <person name="Leite L.C.C."/>
            <person name="Lemos E.G.M."/>
            <person name="Lemos M.V.F."/>
            <person name="Lopes S.A."/>
            <person name="Lopes C.R."/>
            <person name="Machado J.A."/>
            <person name="Machado M.A."/>
            <person name="Madeira A.M.B.N."/>
            <person name="Madeira H.M.F."/>
            <person name="Marino C.L."/>
            <person name="Marques M.V."/>
            <person name="Martins E.A.L."/>
            <person name="Martins E.M.F."/>
            <person name="Matsukuma A.Y."/>
            <person name="Menck C.F.M."/>
            <person name="Miracca E.C."/>
            <person name="Miyaki C.Y."/>
            <person name="Monteiro-Vitorello C.B."/>
            <person name="Moon D.H."/>
            <person name="Nagai M.A."/>
            <person name="Nascimento A.L.T.O."/>
            <person name="Netto L.E.S."/>
            <person name="Nhani A. Jr."/>
            <person name="Nobrega F.G."/>
            <person name="Nunes L.R."/>
            <person name="Oliveira M.A."/>
            <person name="de Oliveira M.C."/>
            <person name="de Oliveira R.C."/>
            <person name="Palmieri D.A."/>
            <person name="Paris A."/>
            <person name="Peixoto B.R."/>
            <person name="Pereira G.A.G."/>
            <person name="Pereira H.A. Jr."/>
            <person name="Pesquero J.B."/>
            <person name="Quaggio R.B."/>
            <person name="Roberto P.G."/>
            <person name="Rodrigues V."/>
            <person name="de Rosa A.J.M."/>
            <person name="de Rosa V.E. Jr."/>
            <person name="de Sa R.G."/>
            <person name="Santelli R.V."/>
            <person name="Sawasaki H.E."/>
            <person name="da Silva A.C.R."/>
            <person name="da Silva A.M."/>
            <person name="da Silva F.R."/>
            <person name="Silva W.A. Jr."/>
            <person name="da Silveira J.F."/>
            <person name="Silvestri M.L.Z."/>
            <person name="Siqueira W.J."/>
            <person name="de Souza A.A."/>
            <person name="de Souza A.P."/>
            <person name="Terenzi M.F."/>
            <person name="Truffi D."/>
            <person name="Tsai S.M."/>
            <person name="Tsuhako M.H."/>
            <person name="Vallada H."/>
            <person name="Van Sluys M.A."/>
            <person name="Verjovski-Almeida S."/>
            <person name="Vettore A.L."/>
            <person name="Zago M.A."/>
            <person name="Zatz M."/>
            <person name="Meidanis J."/>
            <person name="Setubal J.C."/>
        </authorList>
    </citation>
    <scope>NUCLEOTIDE SEQUENCE [LARGE SCALE GENOMIC DNA]</scope>
    <source>
        <strain>9a5c</strain>
    </source>
</reference>
<comment type="function">
    <text evidence="1">ATP-dependent specificity component of the Clp protease. It directs the protease to specific substrates. Can perform chaperone functions in the absence of ClpP.</text>
</comment>
<comment type="subunit">
    <text evidence="1">Component of the ClpX-ClpP complex. Forms a hexameric ring that, in the presence of ATP, binds to fourteen ClpP subunits assembled into a disk-like structure with a central cavity, resembling the structure of eukaryotic proteasomes.</text>
</comment>
<comment type="similarity">
    <text evidence="1">Belongs to the ClpX chaperone family.</text>
</comment>
<proteinExistence type="inferred from homology"/>
<keyword id="KW-0067">ATP-binding</keyword>
<keyword id="KW-0143">Chaperone</keyword>
<keyword id="KW-0479">Metal-binding</keyword>
<keyword id="KW-0547">Nucleotide-binding</keyword>
<keyword id="KW-0862">Zinc</keyword>
<sequence length="426" mass="47076">MSEDRPSRSGDGNKILYCSFCGKSQREVRKLIAGPSVFICDECVELCNDIIREELEEKSQSARSSLPKPKEILEVLDQYVIGQQRAKRTLAVAVYNHYKRIESRHKNDDIELAKSNILLVGPTGSGKTLLAETLARLLNVPFTIADATTLTEAGYVGEDVENIIQKLLQKCDYDVERAQHGIVYIDEIDKISRKSENPSITRDVSGEGVQQALLKLIEGTVASVPPQGGRKHPQQEFLQVDTKNILFICGGAFAGLDKVIQQRCTEAGGIGFGVKVKSSESKRDVGKVLAGVEPEDLIKFGLIPEFVGRLPVVATLDELDESALVKILTEPKNAITKQFKKLFEMENVELEFRQDALSAVARKALKRKTGARGLRTIVELVLLDTMYELPSQEGISKVVVDESVIENKSEPYLIYQTMPAKVASGE</sequence>
<name>CLPX_XYLFA</name>
<feature type="chain" id="PRO_0000160461" description="ATP-dependent Clp protease ATP-binding subunit ClpX">
    <location>
        <begin position="1"/>
        <end position="426"/>
    </location>
</feature>
<feature type="domain" description="ClpX-type ZB" evidence="2">
    <location>
        <begin position="6"/>
        <end position="59"/>
    </location>
</feature>
<feature type="binding site" evidence="2">
    <location>
        <position position="18"/>
    </location>
    <ligand>
        <name>Zn(2+)</name>
        <dbReference type="ChEBI" id="CHEBI:29105"/>
    </ligand>
</feature>
<feature type="binding site" evidence="2">
    <location>
        <position position="21"/>
    </location>
    <ligand>
        <name>Zn(2+)</name>
        <dbReference type="ChEBI" id="CHEBI:29105"/>
    </ligand>
</feature>
<feature type="binding site" evidence="2">
    <location>
        <position position="40"/>
    </location>
    <ligand>
        <name>Zn(2+)</name>
        <dbReference type="ChEBI" id="CHEBI:29105"/>
    </ligand>
</feature>
<feature type="binding site" evidence="2">
    <location>
        <position position="43"/>
    </location>
    <ligand>
        <name>Zn(2+)</name>
        <dbReference type="ChEBI" id="CHEBI:29105"/>
    </ligand>
</feature>
<feature type="binding site" evidence="1">
    <location>
        <begin position="122"/>
        <end position="129"/>
    </location>
    <ligand>
        <name>ATP</name>
        <dbReference type="ChEBI" id="CHEBI:30616"/>
    </ligand>
</feature>
<gene>
    <name evidence="1" type="primary">clpX</name>
    <name type="ordered locus">XF_1188</name>
</gene>
<accession>Q9PE40</accession>
<protein>
    <recommendedName>
        <fullName evidence="1">ATP-dependent Clp protease ATP-binding subunit ClpX</fullName>
    </recommendedName>
</protein>
<evidence type="ECO:0000255" key="1">
    <source>
        <dbReference type="HAMAP-Rule" id="MF_00175"/>
    </source>
</evidence>
<evidence type="ECO:0000255" key="2">
    <source>
        <dbReference type="PROSITE-ProRule" id="PRU01250"/>
    </source>
</evidence>